<name>ATPD_SHEDO</name>
<evidence type="ECO:0000255" key="1">
    <source>
        <dbReference type="HAMAP-Rule" id="MF_01416"/>
    </source>
</evidence>
<feature type="chain" id="PRO_0000371129" description="ATP synthase subunit delta">
    <location>
        <begin position="1"/>
        <end position="177"/>
    </location>
</feature>
<sequence>MAELTTIARPYAKAAFDFAIENNAVDSWAEMLNFAALVSENESMKPLLTGGLASGKLAALFISVCGEQVNTQGQNLIKVMAENGRLEVLAAVSELFTGYRNEWAKEVEASVVSAIELSSEQQQQVSVSLEKRLARKVKLNCSTDTTLIAGMIIRAGDLVIDGSVSGQLARLSDKLQS</sequence>
<protein>
    <recommendedName>
        <fullName evidence="1">ATP synthase subunit delta</fullName>
    </recommendedName>
    <alternativeName>
        <fullName evidence="1">ATP synthase F(1) sector subunit delta</fullName>
    </alternativeName>
    <alternativeName>
        <fullName evidence="1">F-type ATPase subunit delta</fullName>
        <shortName evidence="1">F-ATPase subunit delta</shortName>
    </alternativeName>
</protein>
<dbReference type="EMBL" id="CP000302">
    <property type="protein sequence ID" value="ABE57028.1"/>
    <property type="molecule type" value="Genomic_DNA"/>
</dbReference>
<dbReference type="RefSeq" id="WP_011498166.1">
    <property type="nucleotide sequence ID" value="NC_007954.1"/>
</dbReference>
<dbReference type="SMR" id="Q12HP8"/>
<dbReference type="STRING" id="318161.Sden_3755"/>
<dbReference type="KEGG" id="sdn:Sden_3755"/>
<dbReference type="eggNOG" id="COG0712">
    <property type="taxonomic scope" value="Bacteria"/>
</dbReference>
<dbReference type="HOGENOM" id="CLU_085114_3_0_6"/>
<dbReference type="OrthoDB" id="9816221at2"/>
<dbReference type="Proteomes" id="UP000001982">
    <property type="component" value="Chromosome"/>
</dbReference>
<dbReference type="GO" id="GO:0005886">
    <property type="term" value="C:plasma membrane"/>
    <property type="evidence" value="ECO:0007669"/>
    <property type="project" value="UniProtKB-SubCell"/>
</dbReference>
<dbReference type="GO" id="GO:0045259">
    <property type="term" value="C:proton-transporting ATP synthase complex"/>
    <property type="evidence" value="ECO:0007669"/>
    <property type="project" value="UniProtKB-KW"/>
</dbReference>
<dbReference type="GO" id="GO:0046933">
    <property type="term" value="F:proton-transporting ATP synthase activity, rotational mechanism"/>
    <property type="evidence" value="ECO:0007669"/>
    <property type="project" value="UniProtKB-UniRule"/>
</dbReference>
<dbReference type="Gene3D" id="1.10.520.20">
    <property type="entry name" value="N-terminal domain of the delta subunit of the F1F0-ATP synthase"/>
    <property type="match status" value="1"/>
</dbReference>
<dbReference type="HAMAP" id="MF_01416">
    <property type="entry name" value="ATP_synth_delta_bact"/>
    <property type="match status" value="1"/>
</dbReference>
<dbReference type="InterPro" id="IPR026015">
    <property type="entry name" value="ATP_synth_OSCP/delta_N_sf"/>
</dbReference>
<dbReference type="InterPro" id="IPR020781">
    <property type="entry name" value="ATPase_OSCP/d_CS"/>
</dbReference>
<dbReference type="InterPro" id="IPR000711">
    <property type="entry name" value="ATPase_OSCP/dsu"/>
</dbReference>
<dbReference type="NCBIfam" id="TIGR01145">
    <property type="entry name" value="ATP_synt_delta"/>
    <property type="match status" value="1"/>
</dbReference>
<dbReference type="NCBIfam" id="NF004402">
    <property type="entry name" value="PRK05758.2-2"/>
    <property type="match status" value="1"/>
</dbReference>
<dbReference type="NCBIfam" id="NF004404">
    <property type="entry name" value="PRK05758.2-5"/>
    <property type="match status" value="1"/>
</dbReference>
<dbReference type="PANTHER" id="PTHR11910">
    <property type="entry name" value="ATP SYNTHASE DELTA CHAIN"/>
    <property type="match status" value="1"/>
</dbReference>
<dbReference type="Pfam" id="PF00213">
    <property type="entry name" value="OSCP"/>
    <property type="match status" value="1"/>
</dbReference>
<dbReference type="PRINTS" id="PR00125">
    <property type="entry name" value="ATPASEDELTA"/>
</dbReference>
<dbReference type="SUPFAM" id="SSF47928">
    <property type="entry name" value="N-terminal domain of the delta subunit of the F1F0-ATP synthase"/>
    <property type="match status" value="1"/>
</dbReference>
<dbReference type="PROSITE" id="PS00389">
    <property type="entry name" value="ATPASE_DELTA"/>
    <property type="match status" value="1"/>
</dbReference>
<keyword id="KW-0066">ATP synthesis</keyword>
<keyword id="KW-0997">Cell inner membrane</keyword>
<keyword id="KW-1003">Cell membrane</keyword>
<keyword id="KW-0139">CF(1)</keyword>
<keyword id="KW-0375">Hydrogen ion transport</keyword>
<keyword id="KW-0406">Ion transport</keyword>
<keyword id="KW-0472">Membrane</keyword>
<keyword id="KW-1185">Reference proteome</keyword>
<keyword id="KW-0813">Transport</keyword>
<accession>Q12HP8</accession>
<reference key="1">
    <citation type="submission" date="2006-03" db="EMBL/GenBank/DDBJ databases">
        <title>Complete sequence of Shewanella denitrificans OS217.</title>
        <authorList>
            <consortium name="US DOE Joint Genome Institute"/>
            <person name="Copeland A."/>
            <person name="Lucas S."/>
            <person name="Lapidus A."/>
            <person name="Barry K."/>
            <person name="Detter J.C."/>
            <person name="Glavina del Rio T."/>
            <person name="Hammon N."/>
            <person name="Israni S."/>
            <person name="Dalin E."/>
            <person name="Tice H."/>
            <person name="Pitluck S."/>
            <person name="Brettin T."/>
            <person name="Bruce D."/>
            <person name="Han C."/>
            <person name="Tapia R."/>
            <person name="Gilna P."/>
            <person name="Kiss H."/>
            <person name="Schmutz J."/>
            <person name="Larimer F."/>
            <person name="Land M."/>
            <person name="Hauser L."/>
            <person name="Kyrpides N."/>
            <person name="Lykidis A."/>
            <person name="Richardson P."/>
        </authorList>
    </citation>
    <scope>NUCLEOTIDE SEQUENCE [LARGE SCALE GENOMIC DNA]</scope>
    <source>
        <strain>OS217 / ATCC BAA-1090 / DSM 15013</strain>
    </source>
</reference>
<comment type="function">
    <text evidence="1">F(1)F(0) ATP synthase produces ATP from ADP in the presence of a proton or sodium gradient. F-type ATPases consist of two structural domains, F(1) containing the extramembraneous catalytic core and F(0) containing the membrane proton channel, linked together by a central stalk and a peripheral stalk. During catalysis, ATP synthesis in the catalytic domain of F(1) is coupled via a rotary mechanism of the central stalk subunits to proton translocation.</text>
</comment>
<comment type="function">
    <text evidence="1">This protein is part of the stalk that links CF(0) to CF(1). It either transmits conformational changes from CF(0) to CF(1) or is implicated in proton conduction.</text>
</comment>
<comment type="subunit">
    <text evidence="1">F-type ATPases have 2 components, F(1) - the catalytic core - and F(0) - the membrane proton channel. F(1) has five subunits: alpha(3), beta(3), gamma(1), delta(1), epsilon(1). F(0) has three main subunits: a(1), b(2) and c(10-14). The alpha and beta chains form an alternating ring which encloses part of the gamma chain. F(1) is attached to F(0) by a central stalk formed by the gamma and epsilon chains, while a peripheral stalk is formed by the delta and b chains.</text>
</comment>
<comment type="subcellular location">
    <subcellularLocation>
        <location evidence="1">Cell inner membrane</location>
        <topology evidence="1">Peripheral membrane protein</topology>
    </subcellularLocation>
</comment>
<comment type="similarity">
    <text evidence="1">Belongs to the ATPase delta chain family.</text>
</comment>
<proteinExistence type="inferred from homology"/>
<gene>
    <name evidence="1" type="primary">atpH</name>
    <name type="ordered locus">Sden_3755</name>
</gene>
<organism>
    <name type="scientific">Shewanella denitrificans (strain OS217 / ATCC BAA-1090 / DSM 15013)</name>
    <dbReference type="NCBI Taxonomy" id="318161"/>
    <lineage>
        <taxon>Bacteria</taxon>
        <taxon>Pseudomonadati</taxon>
        <taxon>Pseudomonadota</taxon>
        <taxon>Gammaproteobacteria</taxon>
        <taxon>Alteromonadales</taxon>
        <taxon>Shewanellaceae</taxon>
        <taxon>Shewanella</taxon>
    </lineage>
</organism>